<gene>
    <name type="ORF">MGG_10503</name>
</gene>
<feature type="chain" id="PRO_0000371528" description="Mannitol-1-phosphate 5-dehydrogenase">
    <location>
        <begin position="1"/>
        <end position="400"/>
    </location>
</feature>
<feature type="active site" evidence="1">
    <location>
        <position position="221"/>
    </location>
</feature>
<feature type="binding site" evidence="1">
    <location>
        <begin position="12"/>
        <end position="23"/>
    </location>
    <ligand>
        <name>NAD(+)</name>
        <dbReference type="ChEBI" id="CHEBI:57540"/>
    </ligand>
</feature>
<accession>P0CT14</accession>
<accession>G4MS33</accession>
<accession>Q5EMU8</accession>
<reference key="1">
    <citation type="journal article" date="2005" name="Nature">
        <title>The genome sequence of the rice blast fungus Magnaporthe grisea.</title>
        <authorList>
            <person name="Dean R.A."/>
            <person name="Talbot N.J."/>
            <person name="Ebbole D.J."/>
            <person name="Farman M.L."/>
            <person name="Mitchell T.K."/>
            <person name="Orbach M.J."/>
            <person name="Thon M.R."/>
            <person name="Kulkarni R."/>
            <person name="Xu J.-R."/>
            <person name="Pan H."/>
            <person name="Read N.D."/>
            <person name="Lee Y.-H."/>
            <person name="Carbone I."/>
            <person name="Brown D."/>
            <person name="Oh Y.Y."/>
            <person name="Donofrio N."/>
            <person name="Jeong J.S."/>
            <person name="Soanes D.M."/>
            <person name="Djonovic S."/>
            <person name="Kolomiets E."/>
            <person name="Rehmeyer C."/>
            <person name="Li W."/>
            <person name="Harding M."/>
            <person name="Kim S."/>
            <person name="Lebrun M.-H."/>
            <person name="Bohnert H."/>
            <person name="Coughlan S."/>
            <person name="Butler J."/>
            <person name="Calvo S.E."/>
            <person name="Ma L.-J."/>
            <person name="Nicol R."/>
            <person name="Purcell S."/>
            <person name="Nusbaum C."/>
            <person name="Galagan J.E."/>
            <person name="Birren B.W."/>
        </authorList>
    </citation>
    <scope>NUCLEOTIDE SEQUENCE [LARGE SCALE GENOMIC DNA]</scope>
    <source>
        <strain>70-15 / ATCC MYA-4617 / FGSC 8958</strain>
    </source>
</reference>
<keyword id="KW-0520">NAD</keyword>
<keyword id="KW-0560">Oxidoreductase</keyword>
<keyword id="KW-1185">Reference proteome</keyword>
<proteinExistence type="inferred from homology"/>
<protein>
    <recommendedName>
        <fullName>Mannitol-1-phosphate 5-dehydrogenase</fullName>
        <shortName>M1PDH</shortName>
        <shortName>MPD</shortName>
        <shortName>MPDH</shortName>
        <ecNumber>1.1.1.17</ecNumber>
    </recommendedName>
</protein>
<comment type="function">
    <text evidence="1">Catalyzes the NAD(H)-dependent interconversion of D-fructose 6-phosphate and D-mannitol 1-phosphate in the mannitol metabolic pathway.</text>
</comment>
<comment type="catalytic activity">
    <reaction>
        <text>D-mannitol 1-phosphate + NAD(+) = beta-D-fructose 6-phosphate + NADH + H(+)</text>
        <dbReference type="Rhea" id="RHEA:19661"/>
        <dbReference type="ChEBI" id="CHEBI:15378"/>
        <dbReference type="ChEBI" id="CHEBI:57540"/>
        <dbReference type="ChEBI" id="CHEBI:57634"/>
        <dbReference type="ChEBI" id="CHEBI:57945"/>
        <dbReference type="ChEBI" id="CHEBI:61381"/>
        <dbReference type="EC" id="1.1.1.17"/>
    </reaction>
</comment>
<comment type="subunit">
    <text evidence="1">Monomer.</text>
</comment>
<comment type="similarity">
    <text evidence="2">Belongs to the mannitol dehydrogenase family.</text>
</comment>
<dbReference type="EC" id="1.1.1.17"/>
<dbReference type="EMBL" id="CM001231">
    <property type="protein sequence ID" value="EHA57499.1"/>
    <property type="molecule type" value="Genomic_DNA"/>
</dbReference>
<dbReference type="RefSeq" id="XP_003710111.1">
    <property type="nucleotide sequence ID" value="XM_003710063.1"/>
</dbReference>
<dbReference type="SMR" id="P0CT14"/>
<dbReference type="STRING" id="242507.P0CT14"/>
<dbReference type="EnsemblFungi" id="MGG_10503T0">
    <property type="protein sequence ID" value="MGG_10503T0"/>
    <property type="gene ID" value="MGG_10503"/>
</dbReference>
<dbReference type="GeneID" id="2682115"/>
<dbReference type="KEGG" id="mgr:MGG_10503"/>
<dbReference type="VEuPathDB" id="FungiDB:MGG_10503"/>
<dbReference type="eggNOG" id="ENOG502QVPN">
    <property type="taxonomic scope" value="Eukaryota"/>
</dbReference>
<dbReference type="HOGENOM" id="CLU_036089_0_1_1"/>
<dbReference type="InParanoid" id="P0CT14"/>
<dbReference type="OMA" id="APFIERK"/>
<dbReference type="OrthoDB" id="418169at2759"/>
<dbReference type="Proteomes" id="UP000009058">
    <property type="component" value="Chromosome 1"/>
</dbReference>
<dbReference type="GO" id="GO:0005829">
    <property type="term" value="C:cytosol"/>
    <property type="evidence" value="ECO:0007669"/>
    <property type="project" value="TreeGrafter"/>
</dbReference>
<dbReference type="GO" id="GO:0008926">
    <property type="term" value="F:mannitol-1-phosphate 5-dehydrogenase activity"/>
    <property type="evidence" value="ECO:0007669"/>
    <property type="project" value="UniProtKB-EC"/>
</dbReference>
<dbReference type="GO" id="GO:0019592">
    <property type="term" value="P:mannitol catabolic process"/>
    <property type="evidence" value="ECO:0007669"/>
    <property type="project" value="TreeGrafter"/>
</dbReference>
<dbReference type="Gene3D" id="1.10.1040.10">
    <property type="entry name" value="N-(1-d-carboxylethyl)-l-norvaline Dehydrogenase, domain 2"/>
    <property type="match status" value="1"/>
</dbReference>
<dbReference type="Gene3D" id="3.40.50.720">
    <property type="entry name" value="NAD(P)-binding Rossmann-like Domain"/>
    <property type="match status" value="1"/>
</dbReference>
<dbReference type="HAMAP" id="MF_00196">
    <property type="entry name" value="Mannitol_dehydrog"/>
    <property type="match status" value="1"/>
</dbReference>
<dbReference type="InterPro" id="IPR008927">
    <property type="entry name" value="6-PGluconate_DH-like_C_sf"/>
</dbReference>
<dbReference type="InterPro" id="IPR013328">
    <property type="entry name" value="6PGD_dom2"/>
</dbReference>
<dbReference type="InterPro" id="IPR023028">
    <property type="entry name" value="Mannitol_1_phos_5_DH"/>
</dbReference>
<dbReference type="InterPro" id="IPR000669">
    <property type="entry name" value="Mannitol_DH"/>
</dbReference>
<dbReference type="InterPro" id="IPR013118">
    <property type="entry name" value="Mannitol_DH_C"/>
</dbReference>
<dbReference type="InterPro" id="IPR013131">
    <property type="entry name" value="Mannitol_DH_N"/>
</dbReference>
<dbReference type="InterPro" id="IPR036291">
    <property type="entry name" value="NAD(P)-bd_dom_sf"/>
</dbReference>
<dbReference type="NCBIfam" id="NF002652">
    <property type="entry name" value="PRK02318.2-5"/>
    <property type="match status" value="1"/>
</dbReference>
<dbReference type="PANTHER" id="PTHR30524:SF0">
    <property type="entry name" value="ALTRONATE OXIDOREDUCTASE-RELATED"/>
    <property type="match status" value="1"/>
</dbReference>
<dbReference type="PANTHER" id="PTHR30524">
    <property type="entry name" value="MANNITOL-1-PHOSPHATE 5-DEHYDROGENASE"/>
    <property type="match status" value="1"/>
</dbReference>
<dbReference type="Pfam" id="PF01232">
    <property type="entry name" value="Mannitol_dh"/>
    <property type="match status" value="1"/>
</dbReference>
<dbReference type="Pfam" id="PF08125">
    <property type="entry name" value="Mannitol_dh_C"/>
    <property type="match status" value="1"/>
</dbReference>
<dbReference type="PRINTS" id="PR00084">
    <property type="entry name" value="MTLDHDRGNASE"/>
</dbReference>
<dbReference type="SUPFAM" id="SSF48179">
    <property type="entry name" value="6-phosphogluconate dehydrogenase C-terminal domain-like"/>
    <property type="match status" value="1"/>
</dbReference>
<dbReference type="SUPFAM" id="SSF51735">
    <property type="entry name" value="NAD(P)-binding Rossmann-fold domains"/>
    <property type="match status" value="1"/>
</dbReference>
<name>MTLD_PYRO7</name>
<sequence length="400" mass="44518">MSQTNGTHTKKAVHFGAGNIGRGFVACFLHNSGYEVVFADVTDRTCDALNNQTSYKVIEVGAEGTEEKTITNYRAINSKTKEDELLQEIATADVVTCSVGPNILKFIAPVIAKGLDMRSEELKPAAVIACENAIGATDTLAEHIKEHLPATRVEDLSTRARFANSAIDRIVPAQDPNSGLDVKLEKFYEWVVDRTPFADHEVPSIEGIHWVDNLEPYIERKLYTVNTGHATAAYHGYNRQKRTVYDALQDREIQSEVRRALENTSKLITAKHGINPEEQQAYVRKIMTRIGNPHLEDAVERVGRAPLRKLSRKERFVGPAAELAEKGEDCSALLDAAEMALRFQNVEEDAESKELAKIMAENSAEQVVSQVCGLQPSEKLYPKMVEIVHRVQQDSMDDTE</sequence>
<evidence type="ECO:0000250" key="1"/>
<evidence type="ECO:0000305" key="2"/>
<organism>
    <name type="scientific">Pyricularia oryzae (strain 70-15 / ATCC MYA-4617 / FGSC 8958)</name>
    <name type="common">Rice blast fungus</name>
    <name type="synonym">Magnaporthe oryzae</name>
    <dbReference type="NCBI Taxonomy" id="242507"/>
    <lineage>
        <taxon>Eukaryota</taxon>
        <taxon>Fungi</taxon>
        <taxon>Dikarya</taxon>
        <taxon>Ascomycota</taxon>
        <taxon>Pezizomycotina</taxon>
        <taxon>Sordariomycetes</taxon>
        <taxon>Sordariomycetidae</taxon>
        <taxon>Magnaporthales</taxon>
        <taxon>Pyriculariaceae</taxon>
        <taxon>Pyricularia</taxon>
    </lineage>
</organism>